<name>GLPB_HUMAN</name>
<reference key="1">
    <citation type="journal article" date="1987" name="Proc. Natl. Acad. Sci. U.S.A.">
        <title>Molecular cloning of a human glycophorin B cDNA: nucleotide sequence and genomic relationship to glycophorin A.</title>
        <authorList>
            <person name="Siebert P.D."/>
            <person name="Fukuda M."/>
        </authorList>
    </citation>
    <scope>NUCLEOTIDE SEQUENCE [MRNA] (ISOFORM 1)</scope>
    <scope>VARIANT THR-84</scope>
</reference>
<reference key="2">
    <citation type="journal article" date="1988" name="Biochem. J.">
        <title>Isolation of cDNA clones for human erythrocyte membrane sialoglycoproteins alpha and delta.</title>
        <authorList>
            <person name="Tate C.G."/>
            <person name="Tanner M.J.A."/>
        </authorList>
    </citation>
    <scope>NUCLEOTIDE SEQUENCE [MRNA] (ISOFORM 1)</scope>
</reference>
<reference key="3">
    <citation type="journal article" date="1989" name="Proc. Natl. Acad. Sci. U.S.A.">
        <title>Structural organization of glycophorin A and B genes: glycophorin B gene evolved by homologous recombination at Alu repeat sequences.</title>
        <authorList>
            <person name="Kudo S."/>
            <person name="Fukuda M."/>
        </authorList>
    </citation>
    <scope>NUCLEOTIDE SEQUENCE [GENOMIC DNA]</scope>
    <scope>VARIANT THR-84</scope>
</reference>
<reference key="4">
    <citation type="submission" date="2007-12" db="EMBL/GenBank/DDBJ databases">
        <title>Extensive alternative splicing of glycophorins in Southeast Asian populations.</title>
        <authorList>
            <person name="Hsu K."/>
            <person name="Chi N."/>
            <person name="Lin M."/>
        </authorList>
    </citation>
    <scope>NUCLEOTIDE SEQUENCE [MRNA] (ISOFORM 2)</scope>
    <scope>ALTERNATIVE SPLICING</scope>
    <source>
        <tissue>Blood</tissue>
    </source>
</reference>
<reference key="5">
    <citation type="journal article" date="2005" name="Nature">
        <title>Generation and annotation of the DNA sequences of human chromosomes 2 and 4.</title>
        <authorList>
            <person name="Hillier L.W."/>
            <person name="Graves T.A."/>
            <person name="Fulton R.S."/>
            <person name="Fulton L.A."/>
            <person name="Pepin K.H."/>
            <person name="Minx P."/>
            <person name="Wagner-McPherson C."/>
            <person name="Layman D."/>
            <person name="Wylie K."/>
            <person name="Sekhon M."/>
            <person name="Becker M.C."/>
            <person name="Fewell G.A."/>
            <person name="Delehaunty K.D."/>
            <person name="Miner T.L."/>
            <person name="Nash W.E."/>
            <person name="Kremitzki C."/>
            <person name="Oddy L."/>
            <person name="Du H."/>
            <person name="Sun H."/>
            <person name="Bradshaw-Cordum H."/>
            <person name="Ali J."/>
            <person name="Carter J."/>
            <person name="Cordes M."/>
            <person name="Harris A."/>
            <person name="Isak A."/>
            <person name="van Brunt A."/>
            <person name="Nguyen C."/>
            <person name="Du F."/>
            <person name="Courtney L."/>
            <person name="Kalicki J."/>
            <person name="Ozersky P."/>
            <person name="Abbott S."/>
            <person name="Armstrong J."/>
            <person name="Belter E.A."/>
            <person name="Caruso L."/>
            <person name="Cedroni M."/>
            <person name="Cotton M."/>
            <person name="Davidson T."/>
            <person name="Desai A."/>
            <person name="Elliott G."/>
            <person name="Erb T."/>
            <person name="Fronick C."/>
            <person name="Gaige T."/>
            <person name="Haakenson W."/>
            <person name="Haglund K."/>
            <person name="Holmes A."/>
            <person name="Harkins R."/>
            <person name="Kim K."/>
            <person name="Kruchowski S.S."/>
            <person name="Strong C.M."/>
            <person name="Grewal N."/>
            <person name="Goyea E."/>
            <person name="Hou S."/>
            <person name="Levy A."/>
            <person name="Martinka S."/>
            <person name="Mead K."/>
            <person name="McLellan M.D."/>
            <person name="Meyer R."/>
            <person name="Randall-Maher J."/>
            <person name="Tomlinson C."/>
            <person name="Dauphin-Kohlberg S."/>
            <person name="Kozlowicz-Reilly A."/>
            <person name="Shah N."/>
            <person name="Swearengen-Shahid S."/>
            <person name="Snider J."/>
            <person name="Strong J.T."/>
            <person name="Thompson J."/>
            <person name="Yoakum M."/>
            <person name="Leonard S."/>
            <person name="Pearman C."/>
            <person name="Trani L."/>
            <person name="Radionenko M."/>
            <person name="Waligorski J.E."/>
            <person name="Wang C."/>
            <person name="Rock S.M."/>
            <person name="Tin-Wollam A.-M."/>
            <person name="Maupin R."/>
            <person name="Latreille P."/>
            <person name="Wendl M.C."/>
            <person name="Yang S.-P."/>
            <person name="Pohl C."/>
            <person name="Wallis J.W."/>
            <person name="Spieth J."/>
            <person name="Bieri T.A."/>
            <person name="Berkowicz N."/>
            <person name="Nelson J.O."/>
            <person name="Osborne J."/>
            <person name="Ding L."/>
            <person name="Meyer R."/>
            <person name="Sabo A."/>
            <person name="Shotland Y."/>
            <person name="Sinha P."/>
            <person name="Wohldmann P.E."/>
            <person name="Cook L.L."/>
            <person name="Hickenbotham M.T."/>
            <person name="Eldred J."/>
            <person name="Williams D."/>
            <person name="Jones T.A."/>
            <person name="She X."/>
            <person name="Ciccarelli F.D."/>
            <person name="Izaurralde E."/>
            <person name="Taylor J."/>
            <person name="Schmutz J."/>
            <person name="Myers R.M."/>
            <person name="Cox D.R."/>
            <person name="Huang X."/>
            <person name="McPherson J.D."/>
            <person name="Mardis E.R."/>
            <person name="Clifton S.W."/>
            <person name="Warren W.C."/>
            <person name="Chinwalla A.T."/>
            <person name="Eddy S.R."/>
            <person name="Marra M.A."/>
            <person name="Ovcharenko I."/>
            <person name="Furey T.S."/>
            <person name="Miller W."/>
            <person name="Eichler E.E."/>
            <person name="Bork P."/>
            <person name="Suyama M."/>
            <person name="Torrents D."/>
            <person name="Waterston R.H."/>
            <person name="Wilson R.K."/>
        </authorList>
    </citation>
    <scope>NUCLEOTIDE SEQUENCE [LARGE SCALE GENOMIC DNA]</scope>
</reference>
<reference key="6">
    <citation type="submission" date="2005-09" db="EMBL/GenBank/DDBJ databases">
        <authorList>
            <person name="Mural R.J."/>
            <person name="Istrail S."/>
            <person name="Sutton G."/>
            <person name="Florea L."/>
            <person name="Halpern A.L."/>
            <person name="Mobarry C.M."/>
            <person name="Lippert R."/>
            <person name="Walenz B."/>
            <person name="Shatkay H."/>
            <person name="Dew I."/>
            <person name="Miller J.R."/>
            <person name="Flanigan M.J."/>
            <person name="Edwards N.J."/>
            <person name="Bolanos R."/>
            <person name="Fasulo D."/>
            <person name="Halldorsson B.V."/>
            <person name="Hannenhalli S."/>
            <person name="Turner R."/>
            <person name="Yooseph S."/>
            <person name="Lu F."/>
            <person name="Nusskern D.R."/>
            <person name="Shue B.C."/>
            <person name="Zheng X.H."/>
            <person name="Zhong F."/>
            <person name="Delcher A.L."/>
            <person name="Huson D.H."/>
            <person name="Kravitz S.A."/>
            <person name="Mouchard L."/>
            <person name="Reinert K."/>
            <person name="Remington K.A."/>
            <person name="Clark A.G."/>
            <person name="Waterman M.S."/>
            <person name="Eichler E.E."/>
            <person name="Adams M.D."/>
            <person name="Hunkapiller M.W."/>
            <person name="Myers E.W."/>
            <person name="Venter J.C."/>
        </authorList>
    </citation>
    <scope>NUCLEOTIDE SEQUENCE [LARGE SCALE GENOMIC DNA]</scope>
</reference>
<reference key="7">
    <citation type="journal article" date="2001" name="Transfusion">
        <title>The low-incidence MNS antigens M(v), s(D), and Mit arise from single amino acid substitutions on GPB.</title>
        <authorList>
            <person name="Storry J.R."/>
            <person name="Reid M.E."/>
            <person name="MacLennan S."/>
            <person name="Lubenko A."/>
            <person name="Nortman P."/>
        </authorList>
    </citation>
    <scope>NUCLEOTIDE SEQUENCE [MRNA] (ISOFORM 1)</scope>
    <scope>VARIANT M(V) SER-22</scope>
    <scope>VARIANTS MIT MET-48 AND HIS-54</scope>
    <scope>VARIANT S(D) ARG-58</scope>
    <scope>VARIANT THR-84</scope>
    <source>
        <tissue>Blood</tissue>
    </source>
</reference>
<reference key="8">
    <citation type="journal article" date="2004" name="Genome Res.">
        <title>The status, quality, and expansion of the NIH full-length cDNA project: the Mammalian Gene Collection (MGC).</title>
        <authorList>
            <consortium name="The MGC Project Team"/>
        </authorList>
    </citation>
    <scope>NUCLEOTIDE SEQUENCE [LARGE SCALE MRNA] (ISOFORM 1)</scope>
</reference>
<reference key="9">
    <citation type="journal article" date="1991" name="J. Biol. Chem.">
        <title>Molecular genetics of human erythrocyte MiIII and MiVI glycophorins. Use of a pseudoexon in construction of two delta-alpha-delta hybrid genes resulting in antigenic diversification.</title>
        <authorList>
            <person name="Huang C.-H."/>
            <person name="Blumenfeld O.O."/>
        </authorList>
    </citation>
    <scope>NUCLEOTIDE SEQUENCE [GENOMIC DNA] OF 13-58</scope>
    <source>
        <tissue>Blood</tissue>
    </source>
</reference>
<reference key="10">
    <citation type="journal article" date="1987" name="Eur. J. Biochem.">
        <title>Hybrid glycophorins from human erythrocyte membranes. I. Isolation and complete structural analysis of the hybrid sialoglycoprotein from Dantu-positive red cells of the N.E. variety.</title>
        <authorList>
            <person name="Dahr W."/>
            <person name="Beyreuther K."/>
            <person name="Moulds J."/>
            <person name="Unger P."/>
        </authorList>
    </citation>
    <scope>PROTEIN SEQUENCE OF 20-90</scope>
</reference>
<reference key="11">
    <citation type="journal article" date="1987" name="J. Biol. Chem.">
        <title>Glycophorins B and C from human erythrocyte membranes. Purification and sequence analysis.</title>
        <authorList>
            <person name="Blanchard D."/>
            <person name="Dahr W."/>
            <person name="Hummel M."/>
            <person name="Latron F."/>
            <person name="Beyreuther K."/>
            <person name="Cartron J.-P."/>
        </authorList>
    </citation>
    <scope>PROTEIN SEQUENCE OF 20-90</scope>
</reference>
<reference key="12">
    <citation type="journal article" date="1992" name="Blood">
        <title>Molecular basis for the human erythrocyte glycophorin specifying the Miltenberger class I (MiI) phenotype.</title>
        <authorList>
            <person name="Huang C.-H."/>
            <person name="Spruell P."/>
            <person name="Moulds J.J."/>
            <person name="Blumenfeld O.O."/>
        </authorList>
    </citation>
    <scope>NUCLEOTIDE SEQUENCE [GENOMIC DNA] OF 20-45</scope>
</reference>
<reference key="13">
    <citation type="journal article" date="1993" name="Proc. Natl. Acad. Sci. U.S.A.">
        <title>Epitopic structure of Tn glycophorin A for an anti-Tn antibody (MLS 128).</title>
        <authorList>
            <person name="Nakada H."/>
            <person name="Inoue M."/>
            <person name="Numata Y."/>
            <person name="Tanaka N."/>
            <person name="Funakoshi I."/>
            <person name="Fukui S."/>
            <person name="Mellors A."/>
            <person name="Yamashina I."/>
        </authorList>
    </citation>
    <scope>PROTEIN SEQUENCE OF 20-40</scope>
    <scope>GLYCOSYLATION AT THR-36 AND SER-38</scope>
</reference>
<reference evidence="12 13 14" key="14">
    <citation type="journal article" date="2022" name="Nat. Struct. Mol. Biol.">
        <title>Architecture of the human erythrocyte ankyrin-1 complex.</title>
        <authorList>
            <person name="Vallese F."/>
            <person name="Kim K."/>
            <person name="Yen L.Y."/>
            <person name="Johnston J.D."/>
            <person name="Noble A.J."/>
            <person name="Cali T."/>
            <person name="Clarke O.B."/>
        </authorList>
    </citation>
    <scope>STRUCTURE BY ELECTRON MICROSCOPY (2.74 ANGSTROMS)</scope>
    <scope>FUNCTION</scope>
    <scope>SUBUNIT</scope>
    <scope>ANKYRIN-1 COMPLEX IDENTIFICATION</scope>
    <scope>INTERACTION WITH RHAG</scope>
</reference>
<dbReference type="EMBL" id="J02982">
    <property type="protein sequence ID" value="AAA52573.1"/>
    <property type="molecule type" value="mRNA"/>
</dbReference>
<dbReference type="EMBL" id="X08055">
    <property type="protein sequence ID" value="CAB42645.1"/>
    <property type="molecule type" value="mRNA"/>
</dbReference>
<dbReference type="EMBL" id="M24137">
    <property type="protein sequence ID" value="AAA58626.1"/>
    <property type="molecule type" value="Genomic_DNA"/>
</dbReference>
<dbReference type="EMBL" id="M24130">
    <property type="protein sequence ID" value="AAA58626.1"/>
    <property type="status" value="JOINED"/>
    <property type="molecule type" value="Genomic_DNA"/>
</dbReference>
<dbReference type="EMBL" id="M24131">
    <property type="protein sequence ID" value="AAA58626.1"/>
    <property type="status" value="JOINED"/>
    <property type="molecule type" value="Genomic_DNA"/>
</dbReference>
<dbReference type="EMBL" id="M24135">
    <property type="protein sequence ID" value="AAA58626.1"/>
    <property type="status" value="JOINED"/>
    <property type="molecule type" value="Genomic_DNA"/>
</dbReference>
<dbReference type="EMBL" id="AY950609">
    <property type="protein sequence ID" value="AAX53130.1"/>
    <property type="molecule type" value="mRNA"/>
</dbReference>
<dbReference type="EMBL" id="AY950610">
    <property type="protein sequence ID" value="AAX53131.1"/>
    <property type="molecule type" value="mRNA"/>
</dbReference>
<dbReference type="EMBL" id="AY950611">
    <property type="protein sequence ID" value="AAX53132.1"/>
    <property type="molecule type" value="mRNA"/>
</dbReference>
<dbReference type="EMBL" id="EU338223">
    <property type="protein sequence ID" value="ACA96781.1"/>
    <property type="molecule type" value="mRNA"/>
</dbReference>
<dbReference type="EMBL" id="EU338235">
    <property type="protein sequence ID" value="ACA96793.1"/>
    <property type="molecule type" value="mRNA"/>
</dbReference>
<dbReference type="EMBL" id="AC093890">
    <property type="status" value="NOT_ANNOTATED_CDS"/>
    <property type="molecule type" value="Genomic_DNA"/>
</dbReference>
<dbReference type="EMBL" id="AC107223">
    <property type="status" value="NOT_ANNOTATED_CDS"/>
    <property type="molecule type" value="Genomic_DNA"/>
</dbReference>
<dbReference type="EMBL" id="AC110762">
    <property type="status" value="NOT_ANNOTATED_CDS"/>
    <property type="molecule type" value="Genomic_DNA"/>
</dbReference>
<dbReference type="EMBL" id="CH471056">
    <property type="protein sequence ID" value="EAX05058.1"/>
    <property type="molecule type" value="Genomic_DNA"/>
</dbReference>
<dbReference type="EMBL" id="BC069310">
    <property type="protein sequence ID" value="AAH69310.1"/>
    <property type="molecule type" value="mRNA"/>
</dbReference>
<dbReference type="EMBL" id="BC121077">
    <property type="protein sequence ID" value="AAI21078.1"/>
    <property type="molecule type" value="mRNA"/>
</dbReference>
<dbReference type="EMBL" id="BC121078">
    <property type="protein sequence ID" value="AAI21079.1"/>
    <property type="molecule type" value="mRNA"/>
</dbReference>
<dbReference type="EMBL" id="M60708">
    <property type="protein sequence ID" value="AAC63048.1"/>
    <property type="molecule type" value="Genomic_DNA"/>
</dbReference>
<dbReference type="CCDS" id="CCDS54809.1">
    <molecule id="P06028-1"/>
</dbReference>
<dbReference type="PIR" id="B33931">
    <property type="entry name" value="B33931"/>
</dbReference>
<dbReference type="RefSeq" id="NP_001291311.1">
    <property type="nucleotide sequence ID" value="NM_001304382.1"/>
</dbReference>
<dbReference type="RefSeq" id="NP_002091.4">
    <molecule id="P06028-1"/>
    <property type="nucleotide sequence ID" value="NM_002100.6"/>
</dbReference>
<dbReference type="PDB" id="8CRT">
    <property type="method" value="EM"/>
    <property type="resolution" value="3.00 A"/>
    <property type="chains" value="P=1-91"/>
</dbReference>
<dbReference type="PDB" id="8CS9">
    <property type="method" value="EM"/>
    <property type="resolution" value="2.74 A"/>
    <property type="chains" value="P=1-91"/>
</dbReference>
<dbReference type="PDB" id="8CSL">
    <property type="method" value="EM"/>
    <property type="resolution" value="25.00 A"/>
    <property type="chains" value="P=1-91"/>
</dbReference>
<dbReference type="PDBsum" id="8CRT"/>
<dbReference type="PDBsum" id="8CS9"/>
<dbReference type="PDBsum" id="8CSL"/>
<dbReference type="EMDB" id="EMD-26958"/>
<dbReference type="EMDB" id="EMD-26960"/>
<dbReference type="EMDB" id="EMD-26965"/>
<dbReference type="SMR" id="P06028"/>
<dbReference type="BioGRID" id="109249">
    <property type="interactions" value="61"/>
</dbReference>
<dbReference type="FunCoup" id="P06028">
    <property type="interactions" value="46"/>
</dbReference>
<dbReference type="IntAct" id="P06028">
    <property type="interactions" value="56"/>
</dbReference>
<dbReference type="STRING" id="9606.ENSP00000427690"/>
<dbReference type="GlyConnect" id="188">
    <property type="glycosylation" value="4 O-Linked glycans"/>
</dbReference>
<dbReference type="GlyConnect" id="189">
    <property type="glycosylation" value="7 O-Linked glycans (1 site)"/>
</dbReference>
<dbReference type="GlyCosmos" id="P06028">
    <property type="glycosylation" value="4 sites, 13 glycans"/>
</dbReference>
<dbReference type="GlyGen" id="P06028">
    <property type="glycosylation" value="5 sites, 11 O-linked glycans (3 sites)"/>
</dbReference>
<dbReference type="iPTMnet" id="P06028"/>
<dbReference type="PhosphoSitePlus" id="P06028"/>
<dbReference type="BioMuta" id="GYPB"/>
<dbReference type="DMDM" id="380865467"/>
<dbReference type="MassIVE" id="P06028"/>
<dbReference type="PaxDb" id="9606-ENSP00000427690"/>
<dbReference type="PeptideAtlas" id="P06028"/>
<dbReference type="Pumba" id="P06028"/>
<dbReference type="Antibodypedia" id="45444">
    <property type="antibodies" value="112 antibodies from 18 providers"/>
</dbReference>
<dbReference type="DNASU" id="2994"/>
<dbReference type="Ensembl" id="ENST00000502664.6">
    <molecule id="P06028-1"/>
    <property type="protein sequence ID" value="ENSP00000427690.1"/>
    <property type="gene ID" value="ENSG00000250361.10"/>
</dbReference>
<dbReference type="Ensembl" id="ENST00000513128.5">
    <molecule id="P06028-2"/>
    <property type="protein sequence ID" value="ENSP00000425244.1"/>
    <property type="gene ID" value="ENSG00000250361.10"/>
</dbReference>
<dbReference type="GeneID" id="2994"/>
<dbReference type="KEGG" id="hsa:2994"/>
<dbReference type="MANE-Select" id="ENST00000502664.6">
    <property type="protein sequence ID" value="ENSP00000427690.1"/>
    <property type="RefSeq nucleotide sequence ID" value="NM_002100.6"/>
    <property type="RefSeq protein sequence ID" value="NP_002091.4"/>
</dbReference>
<dbReference type="UCSC" id="uc003ijm.2">
    <molecule id="P06028-1"/>
    <property type="organism name" value="human"/>
</dbReference>
<dbReference type="AGR" id="HGNC:4703"/>
<dbReference type="CTD" id="2994"/>
<dbReference type="DisGeNET" id="2994"/>
<dbReference type="GeneCards" id="GYPB"/>
<dbReference type="HGNC" id="HGNC:4703">
    <property type="gene designation" value="GYPB"/>
</dbReference>
<dbReference type="HPA" id="ENSG00000250361">
    <property type="expression patterns" value="Tissue enriched (bone)"/>
</dbReference>
<dbReference type="MalaCards" id="GYPB"/>
<dbReference type="MIM" id="111740">
    <property type="type" value="phenotype"/>
</dbReference>
<dbReference type="MIM" id="617923">
    <property type="type" value="gene"/>
</dbReference>
<dbReference type="neXtProt" id="NX_P06028"/>
<dbReference type="OpenTargets" id="ENSG00000250361"/>
<dbReference type="PharmGKB" id="PA29081"/>
<dbReference type="VEuPathDB" id="HostDB:ENSG00000250361"/>
<dbReference type="eggNOG" id="ENOG502R1BQ">
    <property type="taxonomic scope" value="Eukaryota"/>
</dbReference>
<dbReference type="GeneTree" id="ENSGT00550000075214"/>
<dbReference type="HOGENOM" id="CLU_154690_1_0_1"/>
<dbReference type="InParanoid" id="P06028"/>
<dbReference type="PAN-GO" id="P06028">
    <property type="GO annotations" value="1 GO annotation based on evolutionary models"/>
</dbReference>
<dbReference type="PhylomeDB" id="P06028"/>
<dbReference type="TreeFam" id="TF338555"/>
<dbReference type="PathwayCommons" id="P06028"/>
<dbReference type="Reactome" id="R-HSA-202733">
    <property type="pathway name" value="Cell surface interactions at the vascular wall"/>
</dbReference>
<dbReference type="SignaLink" id="P06028"/>
<dbReference type="SIGNOR" id="P06028"/>
<dbReference type="BioGRID-ORCS" id="2994">
    <property type="hits" value="18 hits in 1095 CRISPR screens"/>
</dbReference>
<dbReference type="ChiTaRS" id="GYPB">
    <property type="organism name" value="human"/>
</dbReference>
<dbReference type="GeneWiki" id="GYPB"/>
<dbReference type="GenomeRNAi" id="2994"/>
<dbReference type="Pharos" id="P06028">
    <property type="development level" value="Tbio"/>
</dbReference>
<dbReference type="PRO" id="PR:P06028"/>
<dbReference type="Proteomes" id="UP000005640">
    <property type="component" value="Chromosome 4"/>
</dbReference>
<dbReference type="RNAct" id="P06028">
    <property type="molecule type" value="protein"/>
</dbReference>
<dbReference type="Bgee" id="ENSG00000250361">
    <property type="expression patterns" value="Expressed in trabecular bone tissue and 118 other cell types or tissues"/>
</dbReference>
<dbReference type="ExpressionAtlas" id="P06028">
    <property type="expression patterns" value="baseline and differential"/>
</dbReference>
<dbReference type="GO" id="GO:0170014">
    <property type="term" value="C:ankyrin-1 complex"/>
    <property type="evidence" value="ECO:0000314"/>
    <property type="project" value="UniProtKB"/>
</dbReference>
<dbReference type="GO" id="GO:0005886">
    <property type="term" value="C:plasma membrane"/>
    <property type="evidence" value="ECO:0000318"/>
    <property type="project" value="GO_Central"/>
</dbReference>
<dbReference type="FunFam" id="1.20.5.70:FF:000001">
    <property type="entry name" value="Glycophorin B"/>
    <property type="match status" value="1"/>
</dbReference>
<dbReference type="Gene3D" id="1.20.5.70">
    <property type="match status" value="1"/>
</dbReference>
<dbReference type="InterPro" id="IPR001195">
    <property type="entry name" value="Glycophorin"/>
</dbReference>
<dbReference type="InterPro" id="IPR018938">
    <property type="entry name" value="Glycophorin_CS"/>
</dbReference>
<dbReference type="InterPro" id="IPR049535">
    <property type="entry name" value="GYPA_B"/>
</dbReference>
<dbReference type="PANTHER" id="PTHR13813">
    <property type="entry name" value="GLYCOPHORIN"/>
    <property type="match status" value="1"/>
</dbReference>
<dbReference type="PANTHER" id="PTHR13813:SF2">
    <property type="entry name" value="GLYCOPHORIN-B"/>
    <property type="match status" value="1"/>
</dbReference>
<dbReference type="Pfam" id="PF01102">
    <property type="entry name" value="Glycophorin_A"/>
    <property type="match status" value="1"/>
</dbReference>
<dbReference type="PROSITE" id="PS00312">
    <property type="entry name" value="GLYCOPHORIN_A"/>
    <property type="match status" value="1"/>
</dbReference>
<evidence type="ECO:0000255" key="1"/>
<evidence type="ECO:0000269" key="2">
    <source>
    </source>
</evidence>
<evidence type="ECO:0000269" key="3">
    <source>
    </source>
</evidence>
<evidence type="ECO:0000269" key="4">
    <source>
    </source>
</evidence>
<evidence type="ECO:0000269" key="5">
    <source>
    </source>
</evidence>
<evidence type="ECO:0000269" key="6">
    <source>
    </source>
</evidence>
<evidence type="ECO:0000269" key="7">
    <source>
    </source>
</evidence>
<evidence type="ECO:0000269" key="8">
    <source>
    </source>
</evidence>
<evidence type="ECO:0000303" key="9">
    <source ref="4"/>
</evidence>
<evidence type="ECO:0000305" key="10"/>
<evidence type="ECO:0000312" key="11">
    <source>
        <dbReference type="HGNC" id="HGNC:4703"/>
    </source>
</evidence>
<evidence type="ECO:0007744" key="12">
    <source>
        <dbReference type="PDB" id="8CRT"/>
    </source>
</evidence>
<evidence type="ECO:0007744" key="13">
    <source>
        <dbReference type="PDB" id="8CS9"/>
    </source>
</evidence>
<evidence type="ECO:0007744" key="14">
    <source>
        <dbReference type="PDB" id="8CSL"/>
    </source>
</evidence>
<evidence type="ECO:0007829" key="15">
    <source>
        <dbReference type="PDB" id="8CRT"/>
    </source>
</evidence>
<comment type="function">
    <text evidence="6">Component of the ankyrin-1 complex, a multiprotein complex involved in the stability and shape of the erythrocyte membrane.</text>
</comment>
<comment type="subunit">
    <text evidence="6">Component of the ankyrin-1 complex in the erythrocyte, composed of ANK1, RHCE, RHAG, SLC4A1, EPB42, GYPA, GYPB and AQP1 (PubMed:35835865). Interacts (via the N-terminal) with RHAG; this interaction bridges the (RHAG)2(RHCE) heterotrimer with the SLC4A1 Band 3 I dimer complexed with GYPA (PubMed:35835865).</text>
</comment>
<comment type="interaction">
    <interactant intactId="EBI-10194756">
        <id>P06028</id>
    </interactant>
    <interactant intactId="EBI-18053395">
        <id>Q7Z5P4</id>
        <label>HSD17B13</label>
    </interactant>
    <organismsDiffer>false</organismsDiffer>
    <experiments>3</experiments>
</comment>
<comment type="interaction">
    <interactant intactId="EBI-10194756">
        <id>P06028</id>
    </interactant>
    <interactant intactId="EBI-7545592">
        <id>Q9H6H4</id>
        <label>REEP4</label>
    </interactant>
    <organismsDiffer>false</organismsDiffer>
    <experiments>3</experiments>
</comment>
<comment type="interaction">
    <interactant intactId="EBI-10194756">
        <id>P06028</id>
    </interactant>
    <interactant intactId="EBI-10634734">
        <id>Q99500</id>
        <label>S1PR3</label>
    </interactant>
    <organismsDiffer>false</organismsDiffer>
    <experiments>3</experiments>
</comment>
<comment type="interaction">
    <interactant intactId="EBI-10194756">
        <id>P06028</id>
    </interactant>
    <interactant intactId="EBI-741480">
        <id>Q9UMX0</id>
        <label>UBQLN1</label>
    </interactant>
    <organismsDiffer>false</organismsDiffer>
    <experiments>6</experiments>
</comment>
<comment type="interaction">
    <interactant intactId="EBI-10194756">
        <id>P06028</id>
    </interactant>
    <interactant intactId="EBI-10173939">
        <id>Q9UMX0-2</id>
        <label>UBQLN1</label>
    </interactant>
    <organismsDiffer>false</organismsDiffer>
    <experiments>3</experiments>
</comment>
<comment type="subcellular location">
    <subcellularLocation>
        <location>Cell membrane</location>
        <topology>Single-pass type I membrane protein</topology>
    </subcellularLocation>
</comment>
<comment type="alternative products">
    <event type="alternative splicing"/>
    <isoform>
        <id>P06028-1</id>
        <name>1</name>
        <sequence type="displayed"/>
    </isoform>
    <isoform>
        <id>P06028-2</id>
        <name>2</name>
        <sequence type="described" ref="VSP_047824"/>
    </isoform>
</comment>
<comment type="PTM">
    <text evidence="8">The N-terminal extracellular domain is heavily glycosylated on serine and threonine residues.</text>
</comment>
<comment type="polymorphism">
    <text>Along with GYPA, GYPB is responsible for the MNS blood group system. The molecular basis of the S/s blood group antigen is a single variation in position 48; Thr-48 corresponds to s=MSN4 and Met-48 to S=MNS3.</text>
</comment>
<comment type="similarity">
    <text evidence="10">Belongs to the glycophorin-A family.</text>
</comment>
<proteinExistence type="evidence at protein level"/>
<accession>P06028</accession>
<accession>B8Q174</accession>
<accession>E2QBW7</accession>
<accession>Q0VAF4</accession>
<accession>Q58HE9</accession>
<accession>Q58HF0</accession>
<accession>Q58HF1</accession>
<accession>Q9UCH7</accession>
<protein>
    <recommendedName>
        <fullName evidence="10">Glycophorin-B</fullName>
    </recommendedName>
    <alternativeName>
        <fullName>PAS-3</fullName>
    </alternativeName>
    <alternativeName>
        <fullName>SS-active sialoglycoprotein</fullName>
    </alternativeName>
    <alternativeName>
        <fullName>Sialoglycoprotein delta</fullName>
    </alternativeName>
    <cdAntigenName>CD235b</cdAntigenName>
</protein>
<sequence length="91" mass="9782">MYGKIIFVLLLSEIVSISALSTTEVAMHTSTSSSVTKSYISSQTNGETGQLVHRFTVPAPVVIILIILCVMAGIIGTILLISYSIRRLIKA</sequence>
<organism>
    <name type="scientific">Homo sapiens</name>
    <name type="common">Human</name>
    <dbReference type="NCBI Taxonomy" id="9606"/>
    <lineage>
        <taxon>Eukaryota</taxon>
        <taxon>Metazoa</taxon>
        <taxon>Chordata</taxon>
        <taxon>Craniata</taxon>
        <taxon>Vertebrata</taxon>
        <taxon>Euteleostomi</taxon>
        <taxon>Mammalia</taxon>
        <taxon>Eutheria</taxon>
        <taxon>Euarchontoglires</taxon>
        <taxon>Primates</taxon>
        <taxon>Haplorrhini</taxon>
        <taxon>Catarrhini</taxon>
        <taxon>Hominidae</taxon>
        <taxon>Homo</taxon>
    </lineage>
</organism>
<keyword id="KW-0002">3D-structure</keyword>
<keyword id="KW-0025">Alternative splicing</keyword>
<keyword id="KW-0095">Blood group antigen</keyword>
<keyword id="KW-1003">Cell membrane</keyword>
<keyword id="KW-0903">Direct protein sequencing</keyword>
<keyword id="KW-0325">Glycoprotein</keyword>
<keyword id="KW-0472">Membrane</keyword>
<keyword id="KW-1185">Reference proteome</keyword>
<keyword id="KW-0730">Sialic acid</keyword>
<keyword id="KW-0732">Signal</keyword>
<keyword id="KW-0812">Transmembrane</keyword>
<keyword id="KW-1133">Transmembrane helix</keyword>
<gene>
    <name evidence="11" type="primary">GYPB</name>
    <name type="synonym">GPB</name>
</gene>
<feature type="signal peptide" evidence="5 7 8">
    <location>
        <begin position="1"/>
        <end position="19"/>
    </location>
</feature>
<feature type="chain" id="PRO_0000012136" description="Glycophorin-B">
    <location>
        <begin position="20"/>
        <end position="91"/>
    </location>
</feature>
<feature type="topological domain" description="Extracellular" evidence="1">
    <location>
        <begin position="20"/>
        <end position="59"/>
    </location>
</feature>
<feature type="transmembrane region" description="Helical" evidence="1">
    <location>
        <begin position="60"/>
        <end position="81"/>
    </location>
</feature>
<feature type="topological domain" description="Cytoplasmic" evidence="1">
    <location>
        <begin position="82"/>
        <end position="91"/>
    </location>
</feature>
<feature type="site" description="Not glycosylated">
    <location>
        <position position="33"/>
    </location>
</feature>
<feature type="site" description="Not glycosylated">
    <location>
        <position position="34"/>
    </location>
</feature>
<feature type="glycosylation site" description="O-linked (GalNAc...) threonine" evidence="8">
    <location>
        <position position="36"/>
    </location>
</feature>
<feature type="glycosylation site" description="O-linked (GalNAc...) serine" evidence="8">
    <location>
        <position position="38"/>
    </location>
</feature>
<feature type="splice variant" id="VSP_047824" description="In isoform 2." evidence="9">
    <location>
        <begin position="13"/>
        <end position="45"/>
    </location>
</feature>
<feature type="sequence variant" id="VAR_047948" description="In M(v) antigen; dbSNP:rs199937833." evidence="2">
    <original>T</original>
    <variation>S</variation>
    <location>
        <position position="22"/>
    </location>
</feature>
<feature type="sequence variant" id="VAR_003192" description="In S antigen and Mit antigen; dbSNP:rs7683365." evidence="2">
    <original>T</original>
    <variation>M</variation>
    <location>
        <position position="48"/>
    </location>
</feature>
<feature type="sequence variant" id="VAR_047949" description="In Mit antigen; dbSNP:rs370332485." evidence="2">
    <original>R</original>
    <variation>H</variation>
    <location>
        <position position="54"/>
    </location>
</feature>
<feature type="sequence variant" id="VAR_047950" description="In s(D) antigen; dbSNP:rs374811215." evidence="2">
    <original>P</original>
    <variation>R</variation>
    <location>
        <position position="58"/>
    </location>
</feature>
<feature type="sequence variant" id="VAR_030785" description="In dbSNP:rs1132783." evidence="2 3 4">
    <original>S</original>
    <variation>T</variation>
    <location>
        <position position="84"/>
    </location>
</feature>
<feature type="sequence conflict" description="In Ref. 10; AA sequence and 11; AA sequence." evidence="10" ref="10 11">
    <original>C</original>
    <variation>S</variation>
    <location>
        <position position="69"/>
    </location>
</feature>
<feature type="helix" evidence="15">
    <location>
        <begin position="60"/>
        <end position="90"/>
    </location>
</feature>